<comment type="function">
    <text evidence="1">Catalyzes the formation of acetyl phosphate from acetate and ATP. Can also catalyze the reverse reaction.</text>
</comment>
<comment type="catalytic activity">
    <reaction evidence="1">
        <text>acetate + ATP = acetyl phosphate + ADP</text>
        <dbReference type="Rhea" id="RHEA:11352"/>
        <dbReference type="ChEBI" id="CHEBI:22191"/>
        <dbReference type="ChEBI" id="CHEBI:30089"/>
        <dbReference type="ChEBI" id="CHEBI:30616"/>
        <dbReference type="ChEBI" id="CHEBI:456216"/>
        <dbReference type="EC" id="2.7.2.1"/>
    </reaction>
</comment>
<comment type="cofactor">
    <cofactor evidence="1">
        <name>Mg(2+)</name>
        <dbReference type="ChEBI" id="CHEBI:18420"/>
    </cofactor>
    <cofactor evidence="1">
        <name>Mn(2+)</name>
        <dbReference type="ChEBI" id="CHEBI:29035"/>
    </cofactor>
    <text evidence="1">Mg(2+). Can also accept Mn(2+).</text>
</comment>
<comment type="pathway">
    <text evidence="1">Metabolic intermediate biosynthesis; acetyl-CoA biosynthesis; acetyl-CoA from acetate: step 1/2.</text>
</comment>
<comment type="subunit">
    <text evidence="1">Homodimer.</text>
</comment>
<comment type="subcellular location">
    <subcellularLocation>
        <location evidence="1">Cytoplasm</location>
    </subcellularLocation>
</comment>
<comment type="similarity">
    <text evidence="1">Belongs to the acetokinase family.</text>
</comment>
<accession>Q30WB0</accession>
<dbReference type="EC" id="2.7.2.1" evidence="1"/>
<dbReference type="EMBL" id="CP000112">
    <property type="protein sequence ID" value="ABB40036.1"/>
    <property type="molecule type" value="Genomic_DNA"/>
</dbReference>
<dbReference type="RefSeq" id="WP_011368985.1">
    <property type="nucleotide sequence ID" value="NC_007519.1"/>
</dbReference>
<dbReference type="SMR" id="Q30WB0"/>
<dbReference type="STRING" id="207559.Dde_3242"/>
<dbReference type="KEGG" id="dde:Dde_3242"/>
<dbReference type="eggNOG" id="COG0282">
    <property type="taxonomic scope" value="Bacteria"/>
</dbReference>
<dbReference type="HOGENOM" id="CLU_020352_0_1_7"/>
<dbReference type="UniPathway" id="UPA00340">
    <property type="reaction ID" value="UER00458"/>
</dbReference>
<dbReference type="Proteomes" id="UP000002710">
    <property type="component" value="Chromosome"/>
</dbReference>
<dbReference type="GO" id="GO:0005737">
    <property type="term" value="C:cytoplasm"/>
    <property type="evidence" value="ECO:0007669"/>
    <property type="project" value="UniProtKB-SubCell"/>
</dbReference>
<dbReference type="GO" id="GO:0008776">
    <property type="term" value="F:acetate kinase activity"/>
    <property type="evidence" value="ECO:0007669"/>
    <property type="project" value="UniProtKB-UniRule"/>
</dbReference>
<dbReference type="GO" id="GO:0005524">
    <property type="term" value="F:ATP binding"/>
    <property type="evidence" value="ECO:0007669"/>
    <property type="project" value="UniProtKB-KW"/>
</dbReference>
<dbReference type="GO" id="GO:0000287">
    <property type="term" value="F:magnesium ion binding"/>
    <property type="evidence" value="ECO:0007669"/>
    <property type="project" value="UniProtKB-UniRule"/>
</dbReference>
<dbReference type="GO" id="GO:0006083">
    <property type="term" value="P:acetate metabolic process"/>
    <property type="evidence" value="ECO:0007669"/>
    <property type="project" value="TreeGrafter"/>
</dbReference>
<dbReference type="GO" id="GO:0006085">
    <property type="term" value="P:acetyl-CoA biosynthetic process"/>
    <property type="evidence" value="ECO:0007669"/>
    <property type="project" value="UniProtKB-UniRule"/>
</dbReference>
<dbReference type="CDD" id="cd24010">
    <property type="entry name" value="ASKHA_NBD_AcK_PK"/>
    <property type="match status" value="1"/>
</dbReference>
<dbReference type="Gene3D" id="3.30.420.40">
    <property type="match status" value="2"/>
</dbReference>
<dbReference type="HAMAP" id="MF_00020">
    <property type="entry name" value="Acetate_kinase"/>
    <property type="match status" value="1"/>
</dbReference>
<dbReference type="InterPro" id="IPR004372">
    <property type="entry name" value="Ac/propionate_kinase"/>
</dbReference>
<dbReference type="InterPro" id="IPR000890">
    <property type="entry name" value="Aliphatic_acid_kin_short-chain"/>
</dbReference>
<dbReference type="InterPro" id="IPR023865">
    <property type="entry name" value="Aliphatic_acid_kinase_CS"/>
</dbReference>
<dbReference type="InterPro" id="IPR043129">
    <property type="entry name" value="ATPase_NBD"/>
</dbReference>
<dbReference type="NCBIfam" id="TIGR00016">
    <property type="entry name" value="ackA"/>
    <property type="match status" value="1"/>
</dbReference>
<dbReference type="PANTHER" id="PTHR21060">
    <property type="entry name" value="ACETATE KINASE"/>
    <property type="match status" value="1"/>
</dbReference>
<dbReference type="PANTHER" id="PTHR21060:SF15">
    <property type="entry name" value="ACETATE KINASE-RELATED"/>
    <property type="match status" value="1"/>
</dbReference>
<dbReference type="Pfam" id="PF00871">
    <property type="entry name" value="Acetate_kinase"/>
    <property type="match status" value="1"/>
</dbReference>
<dbReference type="PIRSF" id="PIRSF000722">
    <property type="entry name" value="Acetate_prop_kin"/>
    <property type="match status" value="1"/>
</dbReference>
<dbReference type="PRINTS" id="PR00471">
    <property type="entry name" value="ACETATEKNASE"/>
</dbReference>
<dbReference type="SUPFAM" id="SSF53067">
    <property type="entry name" value="Actin-like ATPase domain"/>
    <property type="match status" value="2"/>
</dbReference>
<dbReference type="PROSITE" id="PS01075">
    <property type="entry name" value="ACETATE_KINASE_1"/>
    <property type="match status" value="1"/>
</dbReference>
<dbReference type="PROSITE" id="PS01076">
    <property type="entry name" value="ACETATE_KINASE_2"/>
    <property type="match status" value="1"/>
</dbReference>
<proteinExistence type="inferred from homology"/>
<name>ACKA_OLEA2</name>
<organism>
    <name type="scientific">Oleidesulfovibrio alaskensis (strain ATCC BAA-1058 / DSM 17464 / G20)</name>
    <name type="common">Desulfovibrio alaskensis</name>
    <dbReference type="NCBI Taxonomy" id="207559"/>
    <lineage>
        <taxon>Bacteria</taxon>
        <taxon>Pseudomonadati</taxon>
        <taxon>Thermodesulfobacteriota</taxon>
        <taxon>Desulfovibrionia</taxon>
        <taxon>Desulfovibrionales</taxon>
        <taxon>Desulfovibrionaceae</taxon>
        <taxon>Oleidesulfovibrio</taxon>
    </lineage>
</organism>
<keyword id="KW-0067">ATP-binding</keyword>
<keyword id="KW-0963">Cytoplasm</keyword>
<keyword id="KW-0418">Kinase</keyword>
<keyword id="KW-0460">Magnesium</keyword>
<keyword id="KW-0479">Metal-binding</keyword>
<keyword id="KW-0547">Nucleotide-binding</keyword>
<keyword id="KW-1185">Reference proteome</keyword>
<keyword id="KW-0808">Transferase</keyword>
<evidence type="ECO:0000255" key="1">
    <source>
        <dbReference type="HAMAP-Rule" id="MF_00020"/>
    </source>
</evidence>
<sequence>MNVLVINAGSSSCKYQLINMESEGVLCAGLVERIGEATGKLAHKIAPDTDSEEKIVLEQPFPNHVEAMKKVVELITDPEKGVIKDKSEIYAIGHRVLLGGEEIKESVKIDEWAKGVIRDYIPLGPLHNPANLAGIEVAEELFPGVPSVGVFDTEFHQTMPAKAYLYPLPLELYEEMKIRRYGFHGTSHRYVTKKTAEFLGKPLDEVNIITCHLGNGCSMAAVKNGKCVDTTMGITPLEGLMMGTRCGDIDPAIVPFLMEKKGLTTAEADTLMNKQSGLKGVCGMNDMRDIHAAVEKGDEKAKLALDMFVYRIKKYIGAFYAALGRVDAVVFTAGIGENDDIVRAEVCENMDVFGIALDAEKNKIRSGEPRNIAAENSKVAVLVVPTNEELEIAQAAVNVLKG</sequence>
<reference key="1">
    <citation type="journal article" date="2011" name="J. Bacteriol.">
        <title>Complete genome sequence and updated annotation of Desulfovibrio alaskensis G20.</title>
        <authorList>
            <person name="Hauser L.J."/>
            <person name="Land M.L."/>
            <person name="Brown S.D."/>
            <person name="Larimer F."/>
            <person name="Keller K.L."/>
            <person name="Rapp-Giles B.J."/>
            <person name="Price M.N."/>
            <person name="Lin M."/>
            <person name="Bruce D.C."/>
            <person name="Detter J.C."/>
            <person name="Tapia R."/>
            <person name="Han C.S."/>
            <person name="Goodwin L.A."/>
            <person name="Cheng J.F."/>
            <person name="Pitluck S."/>
            <person name="Copeland A."/>
            <person name="Lucas S."/>
            <person name="Nolan M."/>
            <person name="Lapidus A.L."/>
            <person name="Palumbo A.V."/>
            <person name="Wall J.D."/>
        </authorList>
    </citation>
    <scope>NUCLEOTIDE SEQUENCE [LARGE SCALE GENOMIC DNA]</scope>
    <source>
        <strain>ATCC BAA-1058 / DSM 17464 / G20</strain>
    </source>
</reference>
<gene>
    <name evidence="1" type="primary">ackA</name>
    <name type="ordered locus">Dde_3242</name>
</gene>
<protein>
    <recommendedName>
        <fullName evidence="1">Acetate kinase</fullName>
        <ecNumber evidence="1">2.7.2.1</ecNumber>
    </recommendedName>
    <alternativeName>
        <fullName evidence="1">Acetokinase</fullName>
    </alternativeName>
</protein>
<feature type="chain" id="PRO_1000002228" description="Acetate kinase">
    <location>
        <begin position="1"/>
        <end position="402"/>
    </location>
</feature>
<feature type="active site" description="Proton donor/acceptor" evidence="1">
    <location>
        <position position="152"/>
    </location>
</feature>
<feature type="binding site" evidence="1">
    <location>
        <position position="7"/>
    </location>
    <ligand>
        <name>Mg(2+)</name>
        <dbReference type="ChEBI" id="CHEBI:18420"/>
    </ligand>
</feature>
<feature type="binding site" evidence="1">
    <location>
        <position position="14"/>
    </location>
    <ligand>
        <name>ATP</name>
        <dbReference type="ChEBI" id="CHEBI:30616"/>
    </ligand>
</feature>
<feature type="binding site" evidence="1">
    <location>
        <position position="95"/>
    </location>
    <ligand>
        <name>substrate</name>
    </ligand>
</feature>
<feature type="binding site" evidence="1">
    <location>
        <begin position="212"/>
        <end position="216"/>
    </location>
    <ligand>
        <name>ATP</name>
        <dbReference type="ChEBI" id="CHEBI:30616"/>
    </ligand>
</feature>
<feature type="binding site" evidence="1">
    <location>
        <begin position="286"/>
        <end position="288"/>
    </location>
    <ligand>
        <name>ATP</name>
        <dbReference type="ChEBI" id="CHEBI:30616"/>
    </ligand>
</feature>
<feature type="binding site" evidence="1">
    <location>
        <begin position="334"/>
        <end position="338"/>
    </location>
    <ligand>
        <name>ATP</name>
        <dbReference type="ChEBI" id="CHEBI:30616"/>
    </ligand>
</feature>
<feature type="binding site" evidence="1">
    <location>
        <position position="388"/>
    </location>
    <ligand>
        <name>Mg(2+)</name>
        <dbReference type="ChEBI" id="CHEBI:18420"/>
    </ligand>
</feature>
<feature type="site" description="Transition state stabilizer" evidence="1">
    <location>
        <position position="184"/>
    </location>
</feature>
<feature type="site" description="Transition state stabilizer" evidence="1">
    <location>
        <position position="245"/>
    </location>
</feature>